<organism>
    <name type="scientific">Arabidopsis thaliana</name>
    <name type="common">Mouse-ear cress</name>
    <dbReference type="NCBI Taxonomy" id="3702"/>
    <lineage>
        <taxon>Eukaryota</taxon>
        <taxon>Viridiplantae</taxon>
        <taxon>Streptophyta</taxon>
        <taxon>Embryophyta</taxon>
        <taxon>Tracheophyta</taxon>
        <taxon>Spermatophyta</taxon>
        <taxon>Magnoliopsida</taxon>
        <taxon>eudicotyledons</taxon>
        <taxon>Gunneridae</taxon>
        <taxon>Pentapetalae</taxon>
        <taxon>rosids</taxon>
        <taxon>malvids</taxon>
        <taxon>Brassicales</taxon>
        <taxon>Brassicaceae</taxon>
        <taxon>Camelineae</taxon>
        <taxon>Arabidopsis</taxon>
    </lineage>
</organism>
<evidence type="ECO:0000269" key="1">
    <source>
    </source>
</evidence>
<evidence type="ECO:0000303" key="2">
    <source>
    </source>
</evidence>
<evidence type="ECO:0000305" key="3"/>
<protein>
    <recommendedName>
        <fullName evidence="2">Large ribosomal subunit protein uL1z</fullName>
    </recommendedName>
    <alternativeName>
        <fullName>60S ribosomal protein L10a-1</fullName>
    </alternativeName>
</protein>
<proteinExistence type="evidence at protein level"/>
<comment type="subunit">
    <text evidence="1">Interacts with the GTPase NUG2.</text>
</comment>
<comment type="similarity">
    <text evidence="3">Belongs to the universal ribosomal protein uL1 family.</text>
</comment>
<comment type="sequence caution" evidence="3">
    <conflict type="erroneous gene model prediction">
        <sequence resource="EMBL-CDS" id="AAF22886"/>
    </conflict>
</comment>
<accession>Q8VZB9</accession>
<accession>Q9SJF4</accession>
<name>R10A1_ARATH</name>
<dbReference type="EMBL" id="AC006932">
    <property type="protein sequence ID" value="AAF22886.1"/>
    <property type="status" value="ALT_SEQ"/>
    <property type="molecule type" value="Genomic_DNA"/>
</dbReference>
<dbReference type="EMBL" id="CP002684">
    <property type="protein sequence ID" value="AEE28281.1"/>
    <property type="molecule type" value="Genomic_DNA"/>
</dbReference>
<dbReference type="EMBL" id="AY065077">
    <property type="protein sequence ID" value="AAL38253.1"/>
    <property type="molecule type" value="mRNA"/>
</dbReference>
<dbReference type="EMBL" id="AY114542">
    <property type="protein sequence ID" value="AAM47861.1"/>
    <property type="molecule type" value="mRNA"/>
</dbReference>
<dbReference type="PIR" id="C86217">
    <property type="entry name" value="C86217"/>
</dbReference>
<dbReference type="RefSeq" id="NP_563813.2">
    <property type="nucleotide sequence ID" value="NM_100709.5"/>
</dbReference>
<dbReference type="SMR" id="Q8VZB9"/>
<dbReference type="BioGRID" id="22597">
    <property type="interactions" value="124"/>
</dbReference>
<dbReference type="FunCoup" id="Q8VZB9">
    <property type="interactions" value="3419"/>
</dbReference>
<dbReference type="STRING" id="3702.Q8VZB9"/>
<dbReference type="PaxDb" id="3702-AT1G08360.1"/>
<dbReference type="ProteomicsDB" id="236470"/>
<dbReference type="EnsemblPlants" id="AT1G08360.1">
    <property type="protein sequence ID" value="AT1G08360.1"/>
    <property type="gene ID" value="AT1G08360"/>
</dbReference>
<dbReference type="GeneID" id="837356"/>
<dbReference type="Gramene" id="AT1G08360.1">
    <property type="protein sequence ID" value="AT1G08360.1"/>
    <property type="gene ID" value="AT1G08360"/>
</dbReference>
<dbReference type="KEGG" id="ath:AT1G08360"/>
<dbReference type="Araport" id="AT1G08360"/>
<dbReference type="TAIR" id="AT1G08360"/>
<dbReference type="eggNOG" id="KOG1570">
    <property type="taxonomic scope" value="Eukaryota"/>
</dbReference>
<dbReference type="HOGENOM" id="CLU_062853_3_0_1"/>
<dbReference type="InParanoid" id="Q8VZB9"/>
<dbReference type="OMA" id="GPRNKMP"/>
<dbReference type="OrthoDB" id="10253007at2759"/>
<dbReference type="PhylomeDB" id="Q8VZB9"/>
<dbReference type="CD-CODE" id="4299E36E">
    <property type="entry name" value="Nucleolus"/>
</dbReference>
<dbReference type="PRO" id="PR:Q8VZB9"/>
<dbReference type="Proteomes" id="UP000006548">
    <property type="component" value="Chromosome 1"/>
</dbReference>
<dbReference type="ExpressionAtlas" id="Q8VZB9">
    <property type="expression patterns" value="baseline and differential"/>
</dbReference>
<dbReference type="GO" id="GO:0022625">
    <property type="term" value="C:cytosolic large ribosomal subunit"/>
    <property type="evidence" value="ECO:0007005"/>
    <property type="project" value="TAIR"/>
</dbReference>
<dbReference type="GO" id="GO:0022626">
    <property type="term" value="C:cytosolic ribosome"/>
    <property type="evidence" value="ECO:0007005"/>
    <property type="project" value="TAIR"/>
</dbReference>
<dbReference type="GO" id="GO:0005576">
    <property type="term" value="C:extracellular region"/>
    <property type="evidence" value="ECO:0007005"/>
    <property type="project" value="TAIR"/>
</dbReference>
<dbReference type="GO" id="GO:0009506">
    <property type="term" value="C:plasmodesma"/>
    <property type="evidence" value="ECO:0007005"/>
    <property type="project" value="TAIR"/>
</dbReference>
<dbReference type="GO" id="GO:0003723">
    <property type="term" value="F:RNA binding"/>
    <property type="evidence" value="ECO:0007669"/>
    <property type="project" value="InterPro"/>
</dbReference>
<dbReference type="GO" id="GO:0003735">
    <property type="term" value="F:structural constituent of ribosome"/>
    <property type="evidence" value="ECO:0000314"/>
    <property type="project" value="CAFA"/>
</dbReference>
<dbReference type="GO" id="GO:0006412">
    <property type="term" value="P:translation"/>
    <property type="evidence" value="ECO:0007669"/>
    <property type="project" value="InterPro"/>
</dbReference>
<dbReference type="CDD" id="cd00403">
    <property type="entry name" value="Ribosomal_L1"/>
    <property type="match status" value="1"/>
</dbReference>
<dbReference type="FunFam" id="3.30.190.20:FF:000006">
    <property type="entry name" value="Ribosomal protein"/>
    <property type="match status" value="1"/>
</dbReference>
<dbReference type="FunFam" id="3.40.50.790:FF:000002">
    <property type="entry name" value="Ribosomal protein"/>
    <property type="match status" value="1"/>
</dbReference>
<dbReference type="FunFam" id="3.30.190.20:FF:000009">
    <property type="entry name" value="Ribosomal protein L10a"/>
    <property type="match status" value="1"/>
</dbReference>
<dbReference type="Gene3D" id="3.30.190.20">
    <property type="match status" value="1"/>
</dbReference>
<dbReference type="Gene3D" id="3.40.50.790">
    <property type="match status" value="1"/>
</dbReference>
<dbReference type="InterPro" id="IPR050257">
    <property type="entry name" value="eL8/uL1-like"/>
</dbReference>
<dbReference type="InterPro" id="IPR002143">
    <property type="entry name" value="Ribosomal_uL1"/>
</dbReference>
<dbReference type="InterPro" id="IPR023674">
    <property type="entry name" value="Ribosomal_uL1-like"/>
</dbReference>
<dbReference type="InterPro" id="IPR028364">
    <property type="entry name" value="Ribosomal_uL1/biogenesis"/>
</dbReference>
<dbReference type="InterPro" id="IPR016095">
    <property type="entry name" value="Ribosomal_uL1_3-a/b-sand"/>
</dbReference>
<dbReference type="InterPro" id="IPR023673">
    <property type="entry name" value="Ribosomal_uL1_CS"/>
</dbReference>
<dbReference type="PANTHER" id="PTHR23105">
    <property type="entry name" value="RIBOSOMAL PROTEIN L7AE FAMILY MEMBER"/>
    <property type="match status" value="1"/>
</dbReference>
<dbReference type="Pfam" id="PF00687">
    <property type="entry name" value="Ribosomal_L1"/>
    <property type="match status" value="1"/>
</dbReference>
<dbReference type="PIRSF" id="PIRSF002155">
    <property type="entry name" value="Ribosomal_L1"/>
    <property type="match status" value="1"/>
</dbReference>
<dbReference type="SUPFAM" id="SSF56808">
    <property type="entry name" value="Ribosomal protein L1"/>
    <property type="match status" value="1"/>
</dbReference>
<dbReference type="PROSITE" id="PS01199">
    <property type="entry name" value="RIBOSOMAL_L1"/>
    <property type="match status" value="1"/>
</dbReference>
<sequence length="216" mass="24469">MSKLQSEAVREAITTITGKSEAKKRNFVETIELQIGLKNYDPQKDKRFSGSVKLPHIPRPKMKICMLGDAQHVEEAEKMGLENMDVESLKKLNKNKKLVKKLAKKYHAFLASESVIKQIPRLLGPGLNKAGKFPTLVSHQESLESKVNETKATVKFQLKKVLCMGVAVGNLSMEEKQIFQNVQMSVNFLVSLLKKNWQNVRCLYLKSTMGPPQRIF</sequence>
<gene>
    <name type="primary">RPL10AA</name>
    <name type="ordered locus">At1g08360</name>
    <name type="ORF">T27G7.6</name>
</gene>
<reference key="1">
    <citation type="journal article" date="2000" name="Nature">
        <title>Sequence and analysis of chromosome 1 of the plant Arabidopsis thaliana.</title>
        <authorList>
            <person name="Theologis A."/>
            <person name="Ecker J.R."/>
            <person name="Palm C.J."/>
            <person name="Federspiel N.A."/>
            <person name="Kaul S."/>
            <person name="White O."/>
            <person name="Alonso J."/>
            <person name="Altafi H."/>
            <person name="Araujo R."/>
            <person name="Bowman C.L."/>
            <person name="Brooks S.Y."/>
            <person name="Buehler E."/>
            <person name="Chan A."/>
            <person name="Chao Q."/>
            <person name="Chen H."/>
            <person name="Cheuk R.F."/>
            <person name="Chin C.W."/>
            <person name="Chung M.K."/>
            <person name="Conn L."/>
            <person name="Conway A.B."/>
            <person name="Conway A.R."/>
            <person name="Creasy T.H."/>
            <person name="Dewar K."/>
            <person name="Dunn P."/>
            <person name="Etgu P."/>
            <person name="Feldblyum T.V."/>
            <person name="Feng J.-D."/>
            <person name="Fong B."/>
            <person name="Fujii C.Y."/>
            <person name="Gill J.E."/>
            <person name="Goldsmith A.D."/>
            <person name="Haas B."/>
            <person name="Hansen N.F."/>
            <person name="Hughes B."/>
            <person name="Huizar L."/>
            <person name="Hunter J.L."/>
            <person name="Jenkins J."/>
            <person name="Johnson-Hopson C."/>
            <person name="Khan S."/>
            <person name="Khaykin E."/>
            <person name="Kim C.J."/>
            <person name="Koo H.L."/>
            <person name="Kremenetskaia I."/>
            <person name="Kurtz D.B."/>
            <person name="Kwan A."/>
            <person name="Lam B."/>
            <person name="Langin-Hooper S."/>
            <person name="Lee A."/>
            <person name="Lee J.M."/>
            <person name="Lenz C.A."/>
            <person name="Li J.H."/>
            <person name="Li Y.-P."/>
            <person name="Lin X."/>
            <person name="Liu S.X."/>
            <person name="Liu Z.A."/>
            <person name="Luros J.S."/>
            <person name="Maiti R."/>
            <person name="Marziali A."/>
            <person name="Militscher J."/>
            <person name="Miranda M."/>
            <person name="Nguyen M."/>
            <person name="Nierman W.C."/>
            <person name="Osborne B.I."/>
            <person name="Pai G."/>
            <person name="Peterson J."/>
            <person name="Pham P.K."/>
            <person name="Rizzo M."/>
            <person name="Rooney T."/>
            <person name="Rowley D."/>
            <person name="Sakano H."/>
            <person name="Salzberg S.L."/>
            <person name="Schwartz J.R."/>
            <person name="Shinn P."/>
            <person name="Southwick A.M."/>
            <person name="Sun H."/>
            <person name="Tallon L.J."/>
            <person name="Tambunga G."/>
            <person name="Toriumi M.J."/>
            <person name="Town C.D."/>
            <person name="Utterback T."/>
            <person name="Van Aken S."/>
            <person name="Vaysberg M."/>
            <person name="Vysotskaia V.S."/>
            <person name="Walker M."/>
            <person name="Wu D."/>
            <person name="Yu G."/>
            <person name="Fraser C.M."/>
            <person name="Venter J.C."/>
            <person name="Davis R.W."/>
        </authorList>
    </citation>
    <scope>NUCLEOTIDE SEQUENCE [LARGE SCALE GENOMIC DNA]</scope>
    <source>
        <strain>cv. Columbia</strain>
    </source>
</reference>
<reference key="2">
    <citation type="journal article" date="2017" name="Plant J.">
        <title>Araport11: a complete reannotation of the Arabidopsis thaliana reference genome.</title>
        <authorList>
            <person name="Cheng C.Y."/>
            <person name="Krishnakumar V."/>
            <person name="Chan A.P."/>
            <person name="Thibaud-Nissen F."/>
            <person name="Schobel S."/>
            <person name="Town C.D."/>
        </authorList>
    </citation>
    <scope>GENOME REANNOTATION</scope>
    <source>
        <strain>cv. Columbia</strain>
    </source>
</reference>
<reference key="3">
    <citation type="journal article" date="2003" name="Science">
        <title>Empirical analysis of transcriptional activity in the Arabidopsis genome.</title>
        <authorList>
            <person name="Yamada K."/>
            <person name="Lim J."/>
            <person name="Dale J.M."/>
            <person name="Chen H."/>
            <person name="Shinn P."/>
            <person name="Palm C.J."/>
            <person name="Southwick A.M."/>
            <person name="Wu H.C."/>
            <person name="Kim C.J."/>
            <person name="Nguyen M."/>
            <person name="Pham P.K."/>
            <person name="Cheuk R.F."/>
            <person name="Karlin-Newmann G."/>
            <person name="Liu S.X."/>
            <person name="Lam B."/>
            <person name="Sakano H."/>
            <person name="Wu T."/>
            <person name="Yu G."/>
            <person name="Miranda M."/>
            <person name="Quach H.L."/>
            <person name="Tripp M."/>
            <person name="Chang C.H."/>
            <person name="Lee J.M."/>
            <person name="Toriumi M.J."/>
            <person name="Chan M.M."/>
            <person name="Tang C.C."/>
            <person name="Onodera C.S."/>
            <person name="Deng J.M."/>
            <person name="Akiyama K."/>
            <person name="Ansari Y."/>
            <person name="Arakawa T."/>
            <person name="Banh J."/>
            <person name="Banno F."/>
            <person name="Bowser L."/>
            <person name="Brooks S.Y."/>
            <person name="Carninci P."/>
            <person name="Chao Q."/>
            <person name="Choy N."/>
            <person name="Enju A."/>
            <person name="Goldsmith A.D."/>
            <person name="Gurjal M."/>
            <person name="Hansen N.F."/>
            <person name="Hayashizaki Y."/>
            <person name="Johnson-Hopson C."/>
            <person name="Hsuan V.W."/>
            <person name="Iida K."/>
            <person name="Karnes M."/>
            <person name="Khan S."/>
            <person name="Koesema E."/>
            <person name="Ishida J."/>
            <person name="Jiang P.X."/>
            <person name="Jones T."/>
            <person name="Kawai J."/>
            <person name="Kamiya A."/>
            <person name="Meyers C."/>
            <person name="Nakajima M."/>
            <person name="Narusaka M."/>
            <person name="Seki M."/>
            <person name="Sakurai T."/>
            <person name="Satou M."/>
            <person name="Tamse R."/>
            <person name="Vaysberg M."/>
            <person name="Wallender E.K."/>
            <person name="Wong C."/>
            <person name="Yamamura Y."/>
            <person name="Yuan S."/>
            <person name="Shinozaki K."/>
            <person name="Davis R.W."/>
            <person name="Theologis A."/>
            <person name="Ecker J.R."/>
        </authorList>
    </citation>
    <scope>NUCLEOTIDE SEQUENCE [LARGE SCALE MRNA]</scope>
    <source>
        <strain>cv. Columbia</strain>
    </source>
</reference>
<reference key="4">
    <citation type="journal article" date="2001" name="Plant Physiol.">
        <title>The organization of cytoplasmic ribosomal protein genes in the Arabidopsis genome.</title>
        <authorList>
            <person name="Barakat A."/>
            <person name="Szick-Miranda K."/>
            <person name="Chang I.-F."/>
            <person name="Guyot R."/>
            <person name="Blanc G."/>
            <person name="Cooke R."/>
            <person name="Delseny M."/>
            <person name="Bailey-Serres J."/>
        </authorList>
    </citation>
    <scope>GENE FAMILY ORGANIZATION</scope>
    <scope>NOMENCLATURE</scope>
</reference>
<reference key="5">
    <citation type="journal article" date="2011" name="J. Biol. Chem.">
        <title>Nuclear/nucleolar GTPase 2 proteins as a subfamily of YlqF/YawG GTPases function in pre-60S ribosomal subunit maturation of mono- and dicotyledonous plants.</title>
        <authorList>
            <person name="Im C.H."/>
            <person name="Hwang S.M."/>
            <person name="Son Y.S."/>
            <person name="Heo J.B."/>
            <person name="Bang W.Y."/>
            <person name="Suwastika I.N."/>
            <person name="Shiina T."/>
            <person name="Bahk J.D."/>
        </authorList>
    </citation>
    <scope>INTERACTION WITH NUG2</scope>
</reference>
<reference key="6">
    <citation type="journal article" date="2023" name="Plant Cell">
        <title>An updated nomenclature for plant ribosomal protein genes.</title>
        <authorList>
            <person name="Scarpin M.R."/>
            <person name="Busche M."/>
            <person name="Martinez R.E."/>
            <person name="Harper L.C."/>
            <person name="Reiser L."/>
            <person name="Szakonyi D."/>
            <person name="Merchante C."/>
            <person name="Lan T."/>
            <person name="Xiong W."/>
            <person name="Mo B."/>
            <person name="Tang G."/>
            <person name="Chen X."/>
            <person name="Bailey-Serres J."/>
            <person name="Browning K.S."/>
            <person name="Brunkard J.O."/>
        </authorList>
    </citation>
    <scope>NOMENCLATURE</scope>
</reference>
<feature type="chain" id="PRO_0000125832" description="Large ribosomal subunit protein uL1z">
    <location>
        <begin position="1"/>
        <end position="216"/>
    </location>
</feature>
<keyword id="KW-1185">Reference proteome</keyword>
<keyword id="KW-0687">Ribonucleoprotein</keyword>
<keyword id="KW-0689">Ribosomal protein</keyword>